<protein>
    <recommendedName>
        <fullName evidence="1">Elongation factor P</fullName>
        <shortName evidence="1">EF-P</shortName>
    </recommendedName>
</protein>
<feature type="chain" id="PRO_1000010791" description="Elongation factor P">
    <location>
        <begin position="1"/>
        <end position="185"/>
    </location>
</feature>
<gene>
    <name evidence="1" type="primary">efp</name>
    <name type="ordered locus">Neut_1302</name>
</gene>
<keyword id="KW-0963">Cytoplasm</keyword>
<keyword id="KW-0251">Elongation factor</keyword>
<keyword id="KW-0648">Protein biosynthesis</keyword>
<name>EFP_NITEC</name>
<dbReference type="EMBL" id="CP000450">
    <property type="protein sequence ID" value="ABI59552.1"/>
    <property type="molecule type" value="Genomic_DNA"/>
</dbReference>
<dbReference type="RefSeq" id="WP_011634371.1">
    <property type="nucleotide sequence ID" value="NC_008344.1"/>
</dbReference>
<dbReference type="SMR" id="Q0AGI0"/>
<dbReference type="STRING" id="335283.Neut_1302"/>
<dbReference type="KEGG" id="net:Neut_1302"/>
<dbReference type="eggNOG" id="COG0231">
    <property type="taxonomic scope" value="Bacteria"/>
</dbReference>
<dbReference type="HOGENOM" id="CLU_074944_2_1_4"/>
<dbReference type="OrthoDB" id="9801844at2"/>
<dbReference type="UniPathway" id="UPA00345"/>
<dbReference type="Proteomes" id="UP000001966">
    <property type="component" value="Chromosome"/>
</dbReference>
<dbReference type="GO" id="GO:0005737">
    <property type="term" value="C:cytoplasm"/>
    <property type="evidence" value="ECO:0007669"/>
    <property type="project" value="UniProtKB-SubCell"/>
</dbReference>
<dbReference type="GO" id="GO:0003746">
    <property type="term" value="F:translation elongation factor activity"/>
    <property type="evidence" value="ECO:0007669"/>
    <property type="project" value="UniProtKB-UniRule"/>
</dbReference>
<dbReference type="GO" id="GO:0043043">
    <property type="term" value="P:peptide biosynthetic process"/>
    <property type="evidence" value="ECO:0007669"/>
    <property type="project" value="InterPro"/>
</dbReference>
<dbReference type="CDD" id="cd05794">
    <property type="entry name" value="S1_EF-P_repeat_2"/>
    <property type="match status" value="1"/>
</dbReference>
<dbReference type="FunFam" id="2.30.30.30:FF:000003">
    <property type="entry name" value="Elongation factor P"/>
    <property type="match status" value="1"/>
</dbReference>
<dbReference type="FunFam" id="2.40.50.140:FF:000004">
    <property type="entry name" value="Elongation factor P"/>
    <property type="match status" value="1"/>
</dbReference>
<dbReference type="FunFam" id="2.40.50.140:FF:000009">
    <property type="entry name" value="Elongation factor P"/>
    <property type="match status" value="1"/>
</dbReference>
<dbReference type="Gene3D" id="2.30.30.30">
    <property type="match status" value="1"/>
</dbReference>
<dbReference type="Gene3D" id="2.40.50.140">
    <property type="entry name" value="Nucleic acid-binding proteins"/>
    <property type="match status" value="2"/>
</dbReference>
<dbReference type="HAMAP" id="MF_00141">
    <property type="entry name" value="EF_P"/>
    <property type="match status" value="1"/>
</dbReference>
<dbReference type="InterPro" id="IPR015365">
    <property type="entry name" value="Elong-fact-P_C"/>
</dbReference>
<dbReference type="InterPro" id="IPR012340">
    <property type="entry name" value="NA-bd_OB-fold"/>
</dbReference>
<dbReference type="InterPro" id="IPR014722">
    <property type="entry name" value="Rib_uL2_dom2"/>
</dbReference>
<dbReference type="InterPro" id="IPR020599">
    <property type="entry name" value="Transl_elong_fac_P/YeiP"/>
</dbReference>
<dbReference type="InterPro" id="IPR013185">
    <property type="entry name" value="Transl_elong_KOW-like"/>
</dbReference>
<dbReference type="InterPro" id="IPR001059">
    <property type="entry name" value="Transl_elong_P/YeiP_cen"/>
</dbReference>
<dbReference type="InterPro" id="IPR013852">
    <property type="entry name" value="Transl_elong_P/YeiP_CS"/>
</dbReference>
<dbReference type="InterPro" id="IPR011768">
    <property type="entry name" value="Transl_elongation_fac_P"/>
</dbReference>
<dbReference type="InterPro" id="IPR008991">
    <property type="entry name" value="Translation_prot_SH3-like_sf"/>
</dbReference>
<dbReference type="NCBIfam" id="TIGR00038">
    <property type="entry name" value="efp"/>
    <property type="match status" value="1"/>
</dbReference>
<dbReference type="NCBIfam" id="NF001810">
    <property type="entry name" value="PRK00529.1"/>
    <property type="match status" value="1"/>
</dbReference>
<dbReference type="PANTHER" id="PTHR30053">
    <property type="entry name" value="ELONGATION FACTOR P"/>
    <property type="match status" value="1"/>
</dbReference>
<dbReference type="PANTHER" id="PTHR30053:SF12">
    <property type="entry name" value="ELONGATION FACTOR P (EF-P) FAMILY PROTEIN"/>
    <property type="match status" value="1"/>
</dbReference>
<dbReference type="Pfam" id="PF01132">
    <property type="entry name" value="EFP"/>
    <property type="match status" value="1"/>
</dbReference>
<dbReference type="Pfam" id="PF08207">
    <property type="entry name" value="EFP_N"/>
    <property type="match status" value="1"/>
</dbReference>
<dbReference type="Pfam" id="PF09285">
    <property type="entry name" value="Elong-fact-P_C"/>
    <property type="match status" value="1"/>
</dbReference>
<dbReference type="PIRSF" id="PIRSF005901">
    <property type="entry name" value="EF-P"/>
    <property type="match status" value="1"/>
</dbReference>
<dbReference type="SMART" id="SM01185">
    <property type="entry name" value="EFP"/>
    <property type="match status" value="1"/>
</dbReference>
<dbReference type="SMART" id="SM00841">
    <property type="entry name" value="Elong-fact-P_C"/>
    <property type="match status" value="1"/>
</dbReference>
<dbReference type="SUPFAM" id="SSF50249">
    <property type="entry name" value="Nucleic acid-binding proteins"/>
    <property type="match status" value="2"/>
</dbReference>
<dbReference type="SUPFAM" id="SSF50104">
    <property type="entry name" value="Translation proteins SH3-like domain"/>
    <property type="match status" value="1"/>
</dbReference>
<dbReference type="PROSITE" id="PS01275">
    <property type="entry name" value="EFP"/>
    <property type="match status" value="1"/>
</dbReference>
<evidence type="ECO:0000255" key="1">
    <source>
        <dbReference type="HAMAP-Rule" id="MF_00141"/>
    </source>
</evidence>
<reference key="1">
    <citation type="journal article" date="2007" name="Environ. Microbiol.">
        <title>Whole-genome analysis of the ammonia-oxidizing bacterium, Nitrosomonas eutropha C91: implications for niche adaptation.</title>
        <authorList>
            <person name="Stein L.Y."/>
            <person name="Arp D.J."/>
            <person name="Berube P.M."/>
            <person name="Chain P.S."/>
            <person name="Hauser L."/>
            <person name="Jetten M.S."/>
            <person name="Klotz M.G."/>
            <person name="Larimer F.W."/>
            <person name="Norton J.M."/>
            <person name="Op den Camp H.J.M."/>
            <person name="Shin M."/>
            <person name="Wei X."/>
        </authorList>
    </citation>
    <scope>NUCLEOTIDE SEQUENCE [LARGE SCALE GENOMIC DNA]</scope>
    <source>
        <strain>DSM 101675 / C91 / Nm57</strain>
    </source>
</reference>
<accession>Q0AGI0</accession>
<comment type="function">
    <text evidence="1">Involved in peptide bond synthesis. Stimulates efficient translation and peptide-bond synthesis on native or reconstituted 70S ribosomes in vitro. Probably functions indirectly by altering the affinity of the ribosome for aminoacyl-tRNA, thus increasing their reactivity as acceptors for peptidyl transferase.</text>
</comment>
<comment type="pathway">
    <text evidence="1">Protein biosynthesis; polypeptide chain elongation.</text>
</comment>
<comment type="subcellular location">
    <subcellularLocation>
        <location evidence="1">Cytoplasm</location>
    </subcellularLocation>
</comment>
<comment type="similarity">
    <text evidence="1">Belongs to the elongation factor P family.</text>
</comment>
<proteinExistence type="inferred from homology"/>
<sequence>MKTAQELRVGNVFMLGRDPMVVLKTEFTKSGRNSSVVKMKYKNLLTESPGEAVYKADDKFDIVVLEKKEVSYSYYASPMYVFMDAEFNQYEVEEETMSDVLSFLEDGMPCEVVFYNDKPISVEMPNSVVREIIYTEPAVKGDTSGKVMKSAKIVTGFELPVPLFCEIGDKIEIDTRTREYRSRVK</sequence>
<organism>
    <name type="scientific">Nitrosomonas eutropha (strain DSM 101675 / C91 / Nm57)</name>
    <dbReference type="NCBI Taxonomy" id="335283"/>
    <lineage>
        <taxon>Bacteria</taxon>
        <taxon>Pseudomonadati</taxon>
        <taxon>Pseudomonadota</taxon>
        <taxon>Betaproteobacteria</taxon>
        <taxon>Nitrosomonadales</taxon>
        <taxon>Nitrosomonadaceae</taxon>
        <taxon>Nitrosomonas</taxon>
    </lineage>
</organism>